<protein>
    <recommendedName>
        <fullName evidence="1">Translational regulator CsrA</fullName>
    </recommendedName>
    <alternativeName>
        <fullName evidence="1">Carbon storage regulator</fullName>
    </alternativeName>
</protein>
<feature type="chain" id="PRO_1000123625" description="Translational regulator CsrA">
    <location>
        <begin position="1"/>
        <end position="61"/>
    </location>
</feature>
<sequence length="61" mass="6856">MLILTRRVGETLMIGDEVTVTVLGVKGNQVRIGVNAPKEVSVHREEIYQRIQAEKSQQSSY</sequence>
<proteinExistence type="inferred from homology"/>
<dbReference type="EMBL" id="FM180568">
    <property type="protein sequence ID" value="CAS10507.1"/>
    <property type="molecule type" value="Genomic_DNA"/>
</dbReference>
<dbReference type="RefSeq" id="WP_000906486.1">
    <property type="nucleotide sequence ID" value="NC_011601.1"/>
</dbReference>
<dbReference type="SMR" id="B7UHB4"/>
<dbReference type="GeneID" id="98389839"/>
<dbReference type="KEGG" id="ecg:E2348C_2959"/>
<dbReference type="HOGENOM" id="CLU_164837_2_1_6"/>
<dbReference type="Proteomes" id="UP000008205">
    <property type="component" value="Chromosome"/>
</dbReference>
<dbReference type="GO" id="GO:0005829">
    <property type="term" value="C:cytosol"/>
    <property type="evidence" value="ECO:0007669"/>
    <property type="project" value="TreeGrafter"/>
</dbReference>
<dbReference type="GO" id="GO:0048027">
    <property type="term" value="F:mRNA 5'-UTR binding"/>
    <property type="evidence" value="ECO:0007669"/>
    <property type="project" value="UniProtKB-UniRule"/>
</dbReference>
<dbReference type="GO" id="GO:0006402">
    <property type="term" value="P:mRNA catabolic process"/>
    <property type="evidence" value="ECO:0007669"/>
    <property type="project" value="InterPro"/>
</dbReference>
<dbReference type="GO" id="GO:0045947">
    <property type="term" value="P:negative regulation of translational initiation"/>
    <property type="evidence" value="ECO:0007669"/>
    <property type="project" value="UniProtKB-UniRule"/>
</dbReference>
<dbReference type="GO" id="GO:0045948">
    <property type="term" value="P:positive regulation of translational initiation"/>
    <property type="evidence" value="ECO:0007669"/>
    <property type="project" value="UniProtKB-UniRule"/>
</dbReference>
<dbReference type="GO" id="GO:0006109">
    <property type="term" value="P:regulation of carbohydrate metabolic process"/>
    <property type="evidence" value="ECO:0007669"/>
    <property type="project" value="UniProtKB-UniRule"/>
</dbReference>
<dbReference type="FunFam" id="2.60.40.4380:FF:000001">
    <property type="entry name" value="Translational regulator CsrA"/>
    <property type="match status" value="1"/>
</dbReference>
<dbReference type="Gene3D" id="2.60.40.4380">
    <property type="entry name" value="Translational regulator CsrA"/>
    <property type="match status" value="1"/>
</dbReference>
<dbReference type="HAMAP" id="MF_00167">
    <property type="entry name" value="CsrA"/>
    <property type="match status" value="1"/>
</dbReference>
<dbReference type="InterPro" id="IPR003751">
    <property type="entry name" value="CsrA"/>
</dbReference>
<dbReference type="InterPro" id="IPR036107">
    <property type="entry name" value="CsrA_sf"/>
</dbReference>
<dbReference type="NCBIfam" id="TIGR00202">
    <property type="entry name" value="csrA"/>
    <property type="match status" value="1"/>
</dbReference>
<dbReference type="NCBIfam" id="NF002469">
    <property type="entry name" value="PRK01712.1"/>
    <property type="match status" value="1"/>
</dbReference>
<dbReference type="PANTHER" id="PTHR34984">
    <property type="entry name" value="CARBON STORAGE REGULATOR"/>
    <property type="match status" value="1"/>
</dbReference>
<dbReference type="PANTHER" id="PTHR34984:SF1">
    <property type="entry name" value="CARBON STORAGE REGULATOR"/>
    <property type="match status" value="1"/>
</dbReference>
<dbReference type="Pfam" id="PF02599">
    <property type="entry name" value="CsrA"/>
    <property type="match status" value="1"/>
</dbReference>
<dbReference type="SUPFAM" id="SSF117130">
    <property type="entry name" value="CsrA-like"/>
    <property type="match status" value="1"/>
</dbReference>
<gene>
    <name evidence="1" type="primary">csrA</name>
    <name type="ordered locus">E2348C_2959</name>
</gene>
<evidence type="ECO:0000255" key="1">
    <source>
        <dbReference type="HAMAP-Rule" id="MF_00167"/>
    </source>
</evidence>
<accession>B7UHB4</accession>
<reference key="1">
    <citation type="journal article" date="2009" name="J. Bacteriol.">
        <title>Complete genome sequence and comparative genome analysis of enteropathogenic Escherichia coli O127:H6 strain E2348/69.</title>
        <authorList>
            <person name="Iguchi A."/>
            <person name="Thomson N.R."/>
            <person name="Ogura Y."/>
            <person name="Saunders D."/>
            <person name="Ooka T."/>
            <person name="Henderson I.R."/>
            <person name="Harris D."/>
            <person name="Asadulghani M."/>
            <person name="Kurokawa K."/>
            <person name="Dean P."/>
            <person name="Kenny B."/>
            <person name="Quail M.A."/>
            <person name="Thurston S."/>
            <person name="Dougan G."/>
            <person name="Hayashi T."/>
            <person name="Parkhill J."/>
            <person name="Frankel G."/>
        </authorList>
    </citation>
    <scope>NUCLEOTIDE SEQUENCE [LARGE SCALE GENOMIC DNA]</scope>
    <source>
        <strain>E2348/69 / EPEC</strain>
    </source>
</reference>
<comment type="function">
    <text evidence="1">A key translational regulator that binds mRNA to regulate translation initiation and/or mRNA stability. Mediates global changes in gene expression, shifting from rapid growth to stress survival by linking envelope stress, the stringent response and the catabolite repression systems. Usually binds in the 5'-UTR; binding at or near the Shine-Dalgarno sequence prevents ribosome-binding, repressing translation, binding elsewhere in the 5'-UTR can activate translation and/or stabilize the mRNA. Its function is antagonized by small RNA(s).</text>
</comment>
<comment type="subunit">
    <text evidence="1">Homodimer; the beta-strands of each monomer intercalate to form a hydrophobic core, while the alpha-helices form wings that extend away from the core.</text>
</comment>
<comment type="subcellular location">
    <subcellularLocation>
        <location evidence="1">Cytoplasm</location>
    </subcellularLocation>
</comment>
<comment type="similarity">
    <text evidence="1">Belongs to the CsrA/RsmA family.</text>
</comment>
<keyword id="KW-0010">Activator</keyword>
<keyword id="KW-0963">Cytoplasm</keyword>
<keyword id="KW-1185">Reference proteome</keyword>
<keyword id="KW-0678">Repressor</keyword>
<keyword id="KW-0694">RNA-binding</keyword>
<keyword id="KW-0810">Translation regulation</keyword>
<organism>
    <name type="scientific">Escherichia coli O127:H6 (strain E2348/69 / EPEC)</name>
    <dbReference type="NCBI Taxonomy" id="574521"/>
    <lineage>
        <taxon>Bacteria</taxon>
        <taxon>Pseudomonadati</taxon>
        <taxon>Pseudomonadota</taxon>
        <taxon>Gammaproteobacteria</taxon>
        <taxon>Enterobacterales</taxon>
        <taxon>Enterobacteriaceae</taxon>
        <taxon>Escherichia</taxon>
    </lineage>
</organism>
<name>CSRA_ECO27</name>